<protein>
    <recommendedName>
        <fullName>Histone H3.2</fullName>
    </recommendedName>
</protein>
<accession>P69248</accession>
<accession>P05203</accession>
<accession>P05329</accession>
<accession>P05330</accession>
<gene>
    <name type="primary">H3-7</name>
</gene>
<gene>
    <name type="primary">H3-16</name>
</gene>
<gene>
    <name type="primary">H3-20</name>
</gene>
<reference key="1">
    <citation type="submission" date="1991-10" db="EMBL/GenBank/DDBJ databases">
        <authorList>
            <person name="Wu S.C."/>
            <person name="Gregersen P."/>
            <person name="Hahlbrock K."/>
        </authorList>
    </citation>
    <scope>NUCLEOTIDE SEQUENCE [GENOMIC DNA]</scope>
    <source>
        <strain>cv. Hamburger Schnitt</strain>
        <tissue>Seedling</tissue>
    </source>
</reference>
<name>H32_PETCR</name>
<keyword id="KW-0007">Acetylation</keyword>
<keyword id="KW-0158">Chromosome</keyword>
<keyword id="KW-0238">DNA-binding</keyword>
<keyword id="KW-0488">Methylation</keyword>
<keyword id="KW-0544">Nucleosome core</keyword>
<keyword id="KW-0539">Nucleus</keyword>
<keyword id="KW-0597">Phosphoprotein</keyword>
<comment type="function">
    <text>Core component of nucleosome. Nucleosomes wrap and compact DNA into chromatin, limiting DNA accessibility to the cellular machineries which require DNA as a template. Histones thereby play a central role in transcription regulation, DNA repair, DNA replication and chromosomal stability. DNA accessibility is regulated via a complex set of post-translational modifications of histones, also called histone code, and nucleosome remodeling.</text>
</comment>
<comment type="subunit">
    <text>The nucleosome is a histone octamer containing two molecules each of H2A, H2B, H3 and H4 assembled in one H3-H4 heterotetramer and two H2A-H2B heterodimers. The octamer wraps approximately 147 bp of DNA.</text>
</comment>
<comment type="subcellular location">
    <subcellularLocation>
        <location evidence="1">Nucleus</location>
    </subcellularLocation>
    <subcellularLocation>
        <location evidence="1">Chromosome</location>
    </subcellularLocation>
</comment>
<comment type="PTM">
    <text evidence="1">Acetylation is generally linked to gene activation. Can be acetylated to form H3K9ac, H3K14ac, H3K18ac and H3K23ac. H3K9ac could compete with H3K9me and prevent gene silencing. H3K9ac is restricted to euchromatin (By similarity).</text>
</comment>
<comment type="PTM">
    <text evidence="1">Methylated to form mainly H3K4me, H3K9me, H3K18me, H3K23me, H3K27me and H3K36me. H3K4me1/2/3, H3K9me3, H3K27me3 and H3K36me1/2/3 are typical marks for euchromatin, whereas heterochromatic chromocenters are enriched in H3K9me1/2 and H3K27me1/2. H2BK143ub1 is probably prerequisite for H3K4me (By similarity).</text>
</comment>
<comment type="PTM">
    <text evidence="1">Can be phosphorylated to form H3S10ph, H3T11ph and H3S28ph.</text>
</comment>
<comment type="similarity">
    <text evidence="3">Belongs to the histone H3 family.</text>
</comment>
<comment type="caution">
    <text evidence="3">To ensure consistency between histone entries, we follow the 'Brno' nomenclature for histone modifications, with positions referring to those used in the literature for the 'closest' model organism. Due to slight variations in histone sequences between organisms and to the presence of initiator methionine in UniProtKB/Swiss-Prot sequences, the actual positions of modified amino acids in the sequence generally differ. In this entry the following conventions are used: H3K4me = methylated Lys-5; H3K9ac = acetylated Lys-10; H3K9me = methylated Lys-10; H3S10ph = phosphorylated Ser-11; H3T11ph = phosphorylated Thr-12; H3K14ac = acetylated Lys-15; H3K18ac = acetylated Lys-19; H3K18me = methylated Lys-19; H3K23ac = acetylated Lys-24; H3K23me = methylated Lys-24; H3K27me = methylated Lys-28; H3S28ph = phosphorylated Ser-29; H3K36me = methylated Lys-37.</text>
</comment>
<proteinExistence type="inferred from homology"/>
<sequence>MARTKQTARKSTGGKAPRKQLATKAARKSAPATGGVKKPHRFRPGTVALREIRKYQKSTELLIRKLPFQRLVREIAQDFKTDLRFQSSAVAALQEAAEAYLVGLFEDTNLCAIHAKRVTIMPKDIQLARRIRGERA</sequence>
<feature type="initiator methionine" description="Removed" evidence="1">
    <location>
        <position position="1"/>
    </location>
</feature>
<feature type="chain" id="PRO_0000221292" description="Histone H3.2">
    <location>
        <begin position="2"/>
        <end position="136"/>
    </location>
</feature>
<feature type="region of interest" description="Disordered" evidence="2">
    <location>
        <begin position="1"/>
        <end position="43"/>
    </location>
</feature>
<feature type="modified residue" description="N6-methylated lysine" evidence="1">
    <location>
        <position position="5"/>
    </location>
</feature>
<feature type="modified residue" description="N6-acetyllysine; alternate" evidence="1">
    <location>
        <position position="10"/>
    </location>
</feature>
<feature type="modified residue" description="N6-methylated lysine; alternate" evidence="1">
    <location>
        <position position="10"/>
    </location>
</feature>
<feature type="modified residue" description="Phosphoserine" evidence="1">
    <location>
        <position position="11"/>
    </location>
</feature>
<feature type="modified residue" description="Phosphothreonine" evidence="1">
    <location>
        <position position="12"/>
    </location>
</feature>
<feature type="modified residue" description="N6-acetyllysine" evidence="1">
    <location>
        <position position="15"/>
    </location>
</feature>
<feature type="modified residue" description="N6-acetyllysine; alternate" evidence="1">
    <location>
        <position position="19"/>
    </location>
</feature>
<feature type="modified residue" description="N6-methylated lysine; alternate" evidence="1">
    <location>
        <position position="19"/>
    </location>
</feature>
<feature type="modified residue" description="N6-acetyllysine; alternate" evidence="1">
    <location>
        <position position="24"/>
    </location>
</feature>
<feature type="modified residue" description="N6-methylated lysine; alternate" evidence="1">
    <location>
        <position position="24"/>
    </location>
</feature>
<feature type="modified residue" description="N6-methylated lysine" evidence="1">
    <location>
        <position position="28"/>
    </location>
</feature>
<feature type="modified residue" description="Phosphoserine" evidence="1">
    <location>
        <position position="29"/>
    </location>
</feature>
<feature type="modified residue" description="N6-methylated lysine" evidence="1">
    <location>
        <position position="37"/>
    </location>
</feature>
<organism>
    <name type="scientific">Petroselinum crispum</name>
    <name type="common">Parsley</name>
    <name type="synonym">Petroselinum hortense</name>
    <dbReference type="NCBI Taxonomy" id="4043"/>
    <lineage>
        <taxon>Eukaryota</taxon>
        <taxon>Viridiplantae</taxon>
        <taxon>Streptophyta</taxon>
        <taxon>Embryophyta</taxon>
        <taxon>Tracheophyta</taxon>
        <taxon>Spermatophyta</taxon>
        <taxon>Magnoliopsida</taxon>
        <taxon>eudicotyledons</taxon>
        <taxon>Gunneridae</taxon>
        <taxon>Pentapetalae</taxon>
        <taxon>asterids</taxon>
        <taxon>campanulids</taxon>
        <taxon>Apiales</taxon>
        <taxon>Apiaceae</taxon>
        <taxon>Apioideae</taxon>
        <taxon>apioid superclade</taxon>
        <taxon>Apieae</taxon>
        <taxon>Petroselinum</taxon>
    </lineage>
</organism>
<evidence type="ECO:0000250" key="1"/>
<evidence type="ECO:0000256" key="2">
    <source>
        <dbReference type="SAM" id="MobiDB-lite"/>
    </source>
</evidence>
<evidence type="ECO:0000305" key="3"/>
<dbReference type="EMBL" id="M77493">
    <property type="protein sequence ID" value="AAA33852.1"/>
    <property type="molecule type" value="Genomic_DNA"/>
</dbReference>
<dbReference type="EMBL" id="M77494">
    <property type="protein sequence ID" value="AAA33853.1"/>
    <property type="molecule type" value="Genomic_DNA"/>
</dbReference>
<dbReference type="EMBL" id="M77495">
    <property type="protein sequence ID" value="AAA33854.1"/>
    <property type="molecule type" value="Genomic_DNA"/>
</dbReference>
<dbReference type="SMR" id="P69248"/>
<dbReference type="GO" id="GO:0000786">
    <property type="term" value="C:nucleosome"/>
    <property type="evidence" value="ECO:0007669"/>
    <property type="project" value="UniProtKB-KW"/>
</dbReference>
<dbReference type="GO" id="GO:0005634">
    <property type="term" value="C:nucleus"/>
    <property type="evidence" value="ECO:0007669"/>
    <property type="project" value="UniProtKB-SubCell"/>
</dbReference>
<dbReference type="GO" id="GO:0003677">
    <property type="term" value="F:DNA binding"/>
    <property type="evidence" value="ECO:0007669"/>
    <property type="project" value="UniProtKB-KW"/>
</dbReference>
<dbReference type="GO" id="GO:0046982">
    <property type="term" value="F:protein heterodimerization activity"/>
    <property type="evidence" value="ECO:0007669"/>
    <property type="project" value="InterPro"/>
</dbReference>
<dbReference type="GO" id="GO:0030527">
    <property type="term" value="F:structural constituent of chromatin"/>
    <property type="evidence" value="ECO:0007669"/>
    <property type="project" value="InterPro"/>
</dbReference>
<dbReference type="CDD" id="cd22911">
    <property type="entry name" value="HFD_H3"/>
    <property type="match status" value="1"/>
</dbReference>
<dbReference type="FunFam" id="1.10.20.10:FF:000078">
    <property type="entry name" value="Histone H3"/>
    <property type="match status" value="1"/>
</dbReference>
<dbReference type="FunFam" id="1.10.20.10:FF:000044">
    <property type="entry name" value="Histone H3.3"/>
    <property type="match status" value="1"/>
</dbReference>
<dbReference type="Gene3D" id="1.10.20.10">
    <property type="entry name" value="Histone, subunit A"/>
    <property type="match status" value="1"/>
</dbReference>
<dbReference type="InterPro" id="IPR009072">
    <property type="entry name" value="Histone-fold"/>
</dbReference>
<dbReference type="InterPro" id="IPR007125">
    <property type="entry name" value="Histone_H2A/H2B/H3"/>
</dbReference>
<dbReference type="InterPro" id="IPR000164">
    <property type="entry name" value="Histone_H3/CENP-A"/>
</dbReference>
<dbReference type="PANTHER" id="PTHR11426">
    <property type="entry name" value="HISTONE H3"/>
    <property type="match status" value="1"/>
</dbReference>
<dbReference type="Pfam" id="PF00125">
    <property type="entry name" value="Histone"/>
    <property type="match status" value="1"/>
</dbReference>
<dbReference type="PRINTS" id="PR00622">
    <property type="entry name" value="HISTONEH3"/>
</dbReference>
<dbReference type="SMART" id="SM00428">
    <property type="entry name" value="H3"/>
    <property type="match status" value="1"/>
</dbReference>
<dbReference type="SUPFAM" id="SSF47113">
    <property type="entry name" value="Histone-fold"/>
    <property type="match status" value="1"/>
</dbReference>
<dbReference type="PROSITE" id="PS00322">
    <property type="entry name" value="HISTONE_H3_1"/>
    <property type="match status" value="1"/>
</dbReference>
<dbReference type="PROSITE" id="PS00959">
    <property type="entry name" value="HISTONE_H3_2"/>
    <property type="match status" value="1"/>
</dbReference>